<reference key="1">
    <citation type="submission" date="2006-08" db="EMBL/GenBank/DDBJ databases">
        <authorList>
            <consortium name="NIH - Mammalian Gene Collection (MGC) project"/>
        </authorList>
    </citation>
    <scope>NUCLEOTIDE SEQUENCE [LARGE SCALE MRNA]</scope>
    <source>
        <strain>Hereford</strain>
        <tissue>Hypothalamus</tissue>
    </source>
</reference>
<feature type="chain" id="PRO_0000335688" description="Uncharacterized protein C4orf46 homolog">
    <location>
        <begin position="1"/>
        <end position="113"/>
    </location>
</feature>
<feature type="region of interest" description="Disordered" evidence="2">
    <location>
        <begin position="1"/>
        <end position="46"/>
    </location>
</feature>
<feature type="compositionally biased region" description="Pro residues" evidence="2">
    <location>
        <begin position="10"/>
        <end position="19"/>
    </location>
</feature>
<feature type="compositionally biased region" description="Low complexity" evidence="2">
    <location>
        <begin position="20"/>
        <end position="34"/>
    </location>
</feature>
<name>CD046_BOVIN</name>
<proteinExistence type="inferred from homology"/>
<protein>
    <recommendedName>
        <fullName>Uncharacterized protein C4orf46 homolog</fullName>
    </recommendedName>
</protein>
<evidence type="ECO:0000250" key="1">
    <source>
        <dbReference type="UniProtKB" id="Q504U0"/>
    </source>
</evidence>
<evidence type="ECO:0000256" key="2">
    <source>
        <dbReference type="SAM" id="MobiDB-lite"/>
    </source>
</evidence>
<dbReference type="EMBL" id="BC122760">
    <property type="protein sequence ID" value="AAI22761.1"/>
    <property type="molecule type" value="mRNA"/>
</dbReference>
<dbReference type="RefSeq" id="NP_001071581.1">
    <property type="nucleotide sequence ID" value="NM_001078113.2"/>
</dbReference>
<dbReference type="SMR" id="Q0II83"/>
<dbReference type="FunCoup" id="Q0II83">
    <property type="interactions" value="1277"/>
</dbReference>
<dbReference type="STRING" id="9913.ENSBTAP00000044812"/>
<dbReference type="PaxDb" id="9913-ENSBTAP00000044812"/>
<dbReference type="Ensembl" id="ENSBTAT00000047622.3">
    <property type="protein sequence ID" value="ENSBTAP00000044812.2"/>
    <property type="gene ID" value="ENSBTAG00000033486.3"/>
</dbReference>
<dbReference type="GeneID" id="768238"/>
<dbReference type="KEGG" id="bta:768238"/>
<dbReference type="CTD" id="768238"/>
<dbReference type="VEuPathDB" id="HostDB:ENSBTAG00000033486"/>
<dbReference type="VGNC" id="VGNC:52650">
    <property type="gene designation" value="C17H4orf46"/>
</dbReference>
<dbReference type="eggNOG" id="ENOG502SUFC">
    <property type="taxonomic scope" value="Eukaryota"/>
</dbReference>
<dbReference type="GeneTree" id="ENSGT00390000003125"/>
<dbReference type="HOGENOM" id="CLU_171943_0_0_1"/>
<dbReference type="InParanoid" id="Q0II83"/>
<dbReference type="OMA" id="FKCMENA"/>
<dbReference type="OrthoDB" id="9946198at2759"/>
<dbReference type="TreeFam" id="TF338687"/>
<dbReference type="Proteomes" id="UP000009136">
    <property type="component" value="Chromosome 17"/>
</dbReference>
<dbReference type="Bgee" id="ENSBTAG00000033486">
    <property type="expression patterns" value="Expressed in spermatocyte and 108 other cell types or tissues"/>
</dbReference>
<dbReference type="GO" id="GO:0005829">
    <property type="term" value="C:cytosol"/>
    <property type="evidence" value="ECO:0007669"/>
    <property type="project" value="Ensembl"/>
</dbReference>
<dbReference type="InterPro" id="IPR031457">
    <property type="entry name" value="RCDG1"/>
</dbReference>
<dbReference type="PANTHER" id="PTHR31641">
    <property type="entry name" value="RENAL CANCER DIFFERENTIATION GENE 1 PROTEIN"/>
    <property type="match status" value="1"/>
</dbReference>
<dbReference type="PANTHER" id="PTHR31641:SF2">
    <property type="entry name" value="RENAL CANCER DIFFERENTIATION GENE 1 PROTEIN"/>
    <property type="match status" value="1"/>
</dbReference>
<dbReference type="Pfam" id="PF15725">
    <property type="entry name" value="RCDG1"/>
    <property type="match status" value="1"/>
</dbReference>
<organism>
    <name type="scientific">Bos taurus</name>
    <name type="common">Bovine</name>
    <dbReference type="NCBI Taxonomy" id="9913"/>
    <lineage>
        <taxon>Eukaryota</taxon>
        <taxon>Metazoa</taxon>
        <taxon>Chordata</taxon>
        <taxon>Craniata</taxon>
        <taxon>Vertebrata</taxon>
        <taxon>Euteleostomi</taxon>
        <taxon>Mammalia</taxon>
        <taxon>Eutheria</taxon>
        <taxon>Laurasiatheria</taxon>
        <taxon>Artiodactyla</taxon>
        <taxon>Ruminantia</taxon>
        <taxon>Pecora</taxon>
        <taxon>Bovidae</taxon>
        <taxon>Bovinae</taxon>
        <taxon>Bos</taxon>
    </lineage>
</organism>
<accession>Q0II83</accession>
<comment type="subcellular location">
    <subcellularLocation>
        <location evidence="1">Cytoplasm</location>
    </subcellularLocation>
</comment>
<sequence>MANPEGLQVSPPPPPPPSSPSSSDTSSASSPSAPGVLGWPVPSRSSGRLVDPLEEVELQIGDAAFSLTKLLEATSAVSAQVEELAFKCTENARFLKTWRDLLKEGYDSLKPDN</sequence>
<keyword id="KW-0963">Cytoplasm</keyword>
<keyword id="KW-1185">Reference proteome</keyword>